<sequence length="384" mass="43745">MELEGLWWKGQLAVDIHQTLRYKELKLPSYKGQSPQLNLRRYFADLIAIVSNRFKLCPTARHLAVYLLDLFMDRYDISIQQLHIVALSCLLLASKFEDKEDRVPKLEQLNSLGCMTNMNLVLTKQNLLHMELLLLETFEWNLCLPTPAHFIEYYLSIAVHDTDLHDGWPMICLEKTKIYMAKYADYFLEVSLQDHMFLNYGPSLVAAACVAASRIILRLSPSWPTRLHRLTVYAWDILVPCIERLLIAHDNDVKEASKHKNHLSHTAAQCLFPPASPAPPQAHVQQHMPPYLQSQHHQLQFHHSAPQPQNCQPIITAAHASAFPLQTCASAIPTSIQARGHIQTTASVSLAAVPIEVKPCIGVSYNRSYQVNGHYSRLTQCFDR</sequence>
<proteinExistence type="evidence at transcript level"/>
<comment type="similarity">
    <text evidence="1">Belongs to the cyclin family. Cyclin J subfamily.</text>
</comment>
<organism>
    <name type="scientific">Xenopus laevis</name>
    <name type="common">African clawed frog</name>
    <dbReference type="NCBI Taxonomy" id="8355"/>
    <lineage>
        <taxon>Eukaryota</taxon>
        <taxon>Metazoa</taxon>
        <taxon>Chordata</taxon>
        <taxon>Craniata</taxon>
        <taxon>Vertebrata</taxon>
        <taxon>Euteleostomi</taxon>
        <taxon>Amphibia</taxon>
        <taxon>Batrachia</taxon>
        <taxon>Anura</taxon>
        <taxon>Pipoidea</taxon>
        <taxon>Pipidae</taxon>
        <taxon>Xenopodinae</taxon>
        <taxon>Xenopus</taxon>
        <taxon>Xenopus</taxon>
    </lineage>
</organism>
<name>CCNJ_XENLA</name>
<feature type="chain" id="PRO_0000309318" description="Cyclin-J">
    <location>
        <begin position="1"/>
        <end position="384"/>
    </location>
</feature>
<feature type="domain" description="Cyclin N-terminal">
    <location>
        <begin position="15"/>
        <end position="143"/>
    </location>
</feature>
<evidence type="ECO:0000305" key="1"/>
<protein>
    <recommendedName>
        <fullName>Cyclin-J</fullName>
    </recommendedName>
</protein>
<keyword id="KW-0195">Cyclin</keyword>
<keyword id="KW-1185">Reference proteome</keyword>
<gene>
    <name type="primary">ccnj</name>
</gene>
<accession>Q6DFJ9</accession>
<dbReference type="EMBL" id="BC076737">
    <property type="protein sequence ID" value="AAH76737.1"/>
    <property type="molecule type" value="mRNA"/>
</dbReference>
<dbReference type="RefSeq" id="NP_001086513.1">
    <property type="nucleotide sequence ID" value="NM_001093044.1"/>
</dbReference>
<dbReference type="RefSeq" id="XP_018082423.1">
    <property type="nucleotide sequence ID" value="XM_018226934.1"/>
</dbReference>
<dbReference type="RefSeq" id="XP_018082424.1">
    <property type="nucleotide sequence ID" value="XM_018226935.1"/>
</dbReference>
<dbReference type="SMR" id="Q6DFJ9"/>
<dbReference type="DNASU" id="446348"/>
<dbReference type="AGR" id="Xenbase:XB-GENE-864968"/>
<dbReference type="Xenbase" id="XB-GENE-864968">
    <property type="gene designation" value="ccnj.S"/>
</dbReference>
<dbReference type="OMA" id="VSMHYTC"/>
<dbReference type="OrthoDB" id="285802at2759"/>
<dbReference type="Proteomes" id="UP000186698">
    <property type="component" value="Unplaced"/>
</dbReference>
<dbReference type="Bgee" id="446348">
    <property type="expression patterns" value="Expressed in testis and 10 other cell types or tissues"/>
</dbReference>
<dbReference type="GO" id="GO:0000307">
    <property type="term" value="C:cyclin-dependent protein kinase holoenzyme complex"/>
    <property type="evidence" value="ECO:0000318"/>
    <property type="project" value="GO_Central"/>
</dbReference>
<dbReference type="GO" id="GO:0005737">
    <property type="term" value="C:cytoplasm"/>
    <property type="evidence" value="ECO:0000318"/>
    <property type="project" value="GO_Central"/>
</dbReference>
<dbReference type="GO" id="GO:0005815">
    <property type="term" value="C:microtubule organizing center"/>
    <property type="evidence" value="ECO:0000318"/>
    <property type="project" value="GO_Central"/>
</dbReference>
<dbReference type="GO" id="GO:0005634">
    <property type="term" value="C:nucleus"/>
    <property type="evidence" value="ECO:0000318"/>
    <property type="project" value="GO_Central"/>
</dbReference>
<dbReference type="GO" id="GO:0016538">
    <property type="term" value="F:cyclin-dependent protein serine/threonine kinase regulator activity"/>
    <property type="evidence" value="ECO:0000318"/>
    <property type="project" value="GO_Central"/>
</dbReference>
<dbReference type="GO" id="GO:0000082">
    <property type="term" value="P:G1/S transition of mitotic cell cycle"/>
    <property type="evidence" value="ECO:0000318"/>
    <property type="project" value="GO_Central"/>
</dbReference>
<dbReference type="CDD" id="cd20528">
    <property type="entry name" value="CYCLIN_CCNJ-like_rpt1"/>
    <property type="match status" value="1"/>
</dbReference>
<dbReference type="CDD" id="cd20529">
    <property type="entry name" value="CYCLIN_CCNJ-like_rpt2"/>
    <property type="match status" value="1"/>
</dbReference>
<dbReference type="FunFam" id="1.10.472.10:FF:000022">
    <property type="entry name" value="cyclin-J isoform X1"/>
    <property type="match status" value="1"/>
</dbReference>
<dbReference type="FunFam" id="1.10.472.10:FF:000036">
    <property type="entry name" value="cyclin-J isoform X1"/>
    <property type="match status" value="1"/>
</dbReference>
<dbReference type="Gene3D" id="1.10.472.10">
    <property type="entry name" value="Cyclin-like"/>
    <property type="match status" value="2"/>
</dbReference>
<dbReference type="InterPro" id="IPR039361">
    <property type="entry name" value="Cyclin"/>
</dbReference>
<dbReference type="InterPro" id="IPR013763">
    <property type="entry name" value="Cyclin-like_dom"/>
</dbReference>
<dbReference type="InterPro" id="IPR036915">
    <property type="entry name" value="Cyclin-like_sf"/>
</dbReference>
<dbReference type="InterPro" id="IPR004367">
    <property type="entry name" value="Cyclin_C-dom"/>
</dbReference>
<dbReference type="InterPro" id="IPR006671">
    <property type="entry name" value="Cyclin_N"/>
</dbReference>
<dbReference type="PANTHER" id="PTHR10177">
    <property type="entry name" value="CYCLINS"/>
    <property type="match status" value="1"/>
</dbReference>
<dbReference type="Pfam" id="PF02984">
    <property type="entry name" value="Cyclin_C"/>
    <property type="match status" value="1"/>
</dbReference>
<dbReference type="Pfam" id="PF00134">
    <property type="entry name" value="Cyclin_N"/>
    <property type="match status" value="1"/>
</dbReference>
<dbReference type="SMART" id="SM00385">
    <property type="entry name" value="CYCLIN"/>
    <property type="match status" value="1"/>
</dbReference>
<dbReference type="SMART" id="SM01332">
    <property type="entry name" value="Cyclin_C"/>
    <property type="match status" value="1"/>
</dbReference>
<dbReference type="SUPFAM" id="SSF47954">
    <property type="entry name" value="Cyclin-like"/>
    <property type="match status" value="2"/>
</dbReference>
<reference key="1">
    <citation type="submission" date="2004-07" db="EMBL/GenBank/DDBJ databases">
        <authorList>
            <consortium name="NIH - Xenopus Gene Collection (XGC) project"/>
        </authorList>
    </citation>
    <scope>NUCLEOTIDE SEQUENCE [LARGE SCALE MRNA]</scope>
    <source>
        <tissue>Embryo</tissue>
    </source>
</reference>